<evidence type="ECO:0000255" key="1">
    <source>
        <dbReference type="HAMAP-Rule" id="MF_01725"/>
    </source>
</evidence>
<evidence type="ECO:0000256" key="2">
    <source>
        <dbReference type="SAM" id="MobiDB-lite"/>
    </source>
</evidence>
<feature type="chain" id="PRO_0000281511" description="Zinc import ATP-binding protein ZnuC 1">
    <location>
        <begin position="1"/>
        <end position="255"/>
    </location>
</feature>
<feature type="domain" description="ABC transporter" evidence="1">
    <location>
        <begin position="7"/>
        <end position="220"/>
    </location>
</feature>
<feature type="region of interest" description="Disordered" evidence="2">
    <location>
        <begin position="229"/>
        <end position="255"/>
    </location>
</feature>
<feature type="binding site" evidence="1">
    <location>
        <begin position="39"/>
        <end position="46"/>
    </location>
    <ligand>
        <name>ATP</name>
        <dbReference type="ChEBI" id="CHEBI:30616"/>
    </ligand>
</feature>
<accession>Q2SPI3</accession>
<organism>
    <name type="scientific">Hahella chejuensis (strain KCTC 2396)</name>
    <dbReference type="NCBI Taxonomy" id="349521"/>
    <lineage>
        <taxon>Bacteria</taxon>
        <taxon>Pseudomonadati</taxon>
        <taxon>Pseudomonadota</taxon>
        <taxon>Gammaproteobacteria</taxon>
        <taxon>Oceanospirillales</taxon>
        <taxon>Hahellaceae</taxon>
        <taxon>Hahella</taxon>
    </lineage>
</organism>
<gene>
    <name evidence="1" type="primary">znuC1</name>
    <name type="ordered locus">HCH_00536</name>
</gene>
<comment type="function">
    <text evidence="1">Part of the ABC transporter complex ZnuABC involved in zinc import. Responsible for energy coupling to the transport system.</text>
</comment>
<comment type="catalytic activity">
    <reaction evidence="1">
        <text>Zn(2+)(out) + ATP(in) + H2O(in) = Zn(2+)(in) + ADP(in) + phosphate(in) + H(+)(in)</text>
        <dbReference type="Rhea" id="RHEA:29795"/>
        <dbReference type="ChEBI" id="CHEBI:15377"/>
        <dbReference type="ChEBI" id="CHEBI:15378"/>
        <dbReference type="ChEBI" id="CHEBI:29105"/>
        <dbReference type="ChEBI" id="CHEBI:30616"/>
        <dbReference type="ChEBI" id="CHEBI:43474"/>
        <dbReference type="ChEBI" id="CHEBI:456216"/>
        <dbReference type="EC" id="7.2.2.20"/>
    </reaction>
</comment>
<comment type="subunit">
    <text evidence="1">The complex is composed of two ATP-binding proteins (ZnuC), two transmembrane proteins (ZnuB) and a solute-binding protein (ZnuA).</text>
</comment>
<comment type="subcellular location">
    <subcellularLocation>
        <location evidence="1">Cell inner membrane</location>
        <topology evidence="1">Peripheral membrane protein</topology>
    </subcellularLocation>
</comment>
<comment type="similarity">
    <text evidence="1">Belongs to the ABC transporter superfamily. Zinc importer (TC 3.A.1.15.5) family.</text>
</comment>
<proteinExistence type="inferred from homology"/>
<name>ZNUC1_HAHCH</name>
<keyword id="KW-0067">ATP-binding</keyword>
<keyword id="KW-0997">Cell inner membrane</keyword>
<keyword id="KW-1003">Cell membrane</keyword>
<keyword id="KW-0406">Ion transport</keyword>
<keyword id="KW-0472">Membrane</keyword>
<keyword id="KW-0547">Nucleotide-binding</keyword>
<keyword id="KW-1185">Reference proteome</keyword>
<keyword id="KW-1278">Translocase</keyword>
<keyword id="KW-0813">Transport</keyword>
<keyword id="KW-0862">Zinc</keyword>
<keyword id="KW-0864">Zinc transport</keyword>
<sequence length="255" mass="28178">MNPPPLIRLQDVTVKIQGRTLIENVTFDINSGEIITVIGPNGAGKSTLAKALLGIQPLSRGEVLRRPGLKIGYMPQRFHIDASLPLTVKRFLQLAHNPQRWREALQRVEMEHVAKQPMHTLSGGELQRVLLARALQRAPDLLVLDEPAQGVDVTGQAELYRLIRSLRDELHCGALLVSHDLHLVMASTDQVLCLNRHICCAGHPEKVSNEPAFINLFGTQAARSLAVYHHHHDHHHHTDGTVAAGSECSHGDQHA</sequence>
<protein>
    <recommendedName>
        <fullName evidence="1">Zinc import ATP-binding protein ZnuC 1</fullName>
        <ecNumber evidence="1">7.2.2.20</ecNumber>
    </recommendedName>
</protein>
<reference key="1">
    <citation type="journal article" date="2005" name="Nucleic Acids Res.">
        <title>Genomic blueprint of Hahella chejuensis, a marine microbe producing an algicidal agent.</title>
        <authorList>
            <person name="Jeong H."/>
            <person name="Yim J.H."/>
            <person name="Lee C."/>
            <person name="Choi S.-H."/>
            <person name="Park Y.K."/>
            <person name="Yoon S.H."/>
            <person name="Hur C.-G."/>
            <person name="Kang H.-Y."/>
            <person name="Kim D."/>
            <person name="Lee H.H."/>
            <person name="Park K.H."/>
            <person name="Park S.-H."/>
            <person name="Park H.-S."/>
            <person name="Lee H.K."/>
            <person name="Oh T.K."/>
            <person name="Kim J.F."/>
        </authorList>
    </citation>
    <scope>NUCLEOTIDE SEQUENCE [LARGE SCALE GENOMIC DNA]</scope>
    <source>
        <strain>KCTC 2396</strain>
    </source>
</reference>
<dbReference type="EC" id="7.2.2.20" evidence="1"/>
<dbReference type="EMBL" id="CP000155">
    <property type="protein sequence ID" value="ABC27441.1"/>
    <property type="molecule type" value="Genomic_DNA"/>
</dbReference>
<dbReference type="RefSeq" id="WP_011394518.1">
    <property type="nucleotide sequence ID" value="NC_007645.1"/>
</dbReference>
<dbReference type="SMR" id="Q2SPI3"/>
<dbReference type="STRING" id="349521.HCH_00536"/>
<dbReference type="KEGG" id="hch:HCH_00536"/>
<dbReference type="eggNOG" id="COG1121">
    <property type="taxonomic scope" value="Bacteria"/>
</dbReference>
<dbReference type="HOGENOM" id="CLU_000604_1_11_6"/>
<dbReference type="OrthoDB" id="9780942at2"/>
<dbReference type="Proteomes" id="UP000000238">
    <property type="component" value="Chromosome"/>
</dbReference>
<dbReference type="GO" id="GO:0005886">
    <property type="term" value="C:plasma membrane"/>
    <property type="evidence" value="ECO:0007669"/>
    <property type="project" value="UniProtKB-SubCell"/>
</dbReference>
<dbReference type="GO" id="GO:0015633">
    <property type="term" value="F:ABC-type zinc transporter activity"/>
    <property type="evidence" value="ECO:0007669"/>
    <property type="project" value="UniProtKB-EC"/>
</dbReference>
<dbReference type="GO" id="GO:0005524">
    <property type="term" value="F:ATP binding"/>
    <property type="evidence" value="ECO:0007669"/>
    <property type="project" value="UniProtKB-KW"/>
</dbReference>
<dbReference type="GO" id="GO:0016887">
    <property type="term" value="F:ATP hydrolysis activity"/>
    <property type="evidence" value="ECO:0007669"/>
    <property type="project" value="InterPro"/>
</dbReference>
<dbReference type="GO" id="GO:0010043">
    <property type="term" value="P:response to zinc ion"/>
    <property type="evidence" value="ECO:0007669"/>
    <property type="project" value="TreeGrafter"/>
</dbReference>
<dbReference type="CDD" id="cd03235">
    <property type="entry name" value="ABC_Metallic_Cations"/>
    <property type="match status" value="1"/>
</dbReference>
<dbReference type="FunFam" id="3.40.50.300:FF:000392">
    <property type="entry name" value="Zinc import ATP-binding protein ZnuC"/>
    <property type="match status" value="1"/>
</dbReference>
<dbReference type="Gene3D" id="3.40.50.300">
    <property type="entry name" value="P-loop containing nucleotide triphosphate hydrolases"/>
    <property type="match status" value="1"/>
</dbReference>
<dbReference type="InterPro" id="IPR003593">
    <property type="entry name" value="AAA+_ATPase"/>
</dbReference>
<dbReference type="InterPro" id="IPR003439">
    <property type="entry name" value="ABC_transporter-like_ATP-bd"/>
</dbReference>
<dbReference type="InterPro" id="IPR017871">
    <property type="entry name" value="ABC_transporter-like_CS"/>
</dbReference>
<dbReference type="InterPro" id="IPR050153">
    <property type="entry name" value="Metal_Ion_Import_ABC"/>
</dbReference>
<dbReference type="InterPro" id="IPR027417">
    <property type="entry name" value="P-loop_NTPase"/>
</dbReference>
<dbReference type="NCBIfam" id="NF007090">
    <property type="entry name" value="PRK09544.1"/>
    <property type="match status" value="1"/>
</dbReference>
<dbReference type="PANTHER" id="PTHR42734">
    <property type="entry name" value="METAL TRANSPORT SYSTEM ATP-BINDING PROTEIN TM_0124-RELATED"/>
    <property type="match status" value="1"/>
</dbReference>
<dbReference type="PANTHER" id="PTHR42734:SF9">
    <property type="entry name" value="ZINC IMPORT ATP-BINDING PROTEIN ZNUC"/>
    <property type="match status" value="1"/>
</dbReference>
<dbReference type="Pfam" id="PF00005">
    <property type="entry name" value="ABC_tran"/>
    <property type="match status" value="1"/>
</dbReference>
<dbReference type="SMART" id="SM00382">
    <property type="entry name" value="AAA"/>
    <property type="match status" value="1"/>
</dbReference>
<dbReference type="SUPFAM" id="SSF52540">
    <property type="entry name" value="P-loop containing nucleoside triphosphate hydrolases"/>
    <property type="match status" value="1"/>
</dbReference>
<dbReference type="PROSITE" id="PS00211">
    <property type="entry name" value="ABC_TRANSPORTER_1"/>
    <property type="match status" value="1"/>
</dbReference>
<dbReference type="PROSITE" id="PS50893">
    <property type="entry name" value="ABC_TRANSPORTER_2"/>
    <property type="match status" value="1"/>
</dbReference>
<dbReference type="PROSITE" id="PS51298">
    <property type="entry name" value="ZNUC"/>
    <property type="match status" value="1"/>
</dbReference>